<feature type="chain" id="PRO_0000051262" description="TAF5-like RNA polymerase II p300/CBP-associated factor-associated factor 65 kDa subunit 5L">
    <location>
        <begin position="1"/>
        <end position="589"/>
    </location>
</feature>
<feature type="repeat" description="WD 1">
    <location>
        <begin position="266"/>
        <end position="305"/>
    </location>
</feature>
<feature type="repeat" description="WD 2">
    <location>
        <begin position="340"/>
        <end position="379"/>
    </location>
</feature>
<feature type="repeat" description="WD 3">
    <location>
        <begin position="382"/>
        <end position="421"/>
    </location>
</feature>
<feature type="repeat" description="WD 4">
    <location>
        <begin position="424"/>
        <end position="463"/>
    </location>
</feature>
<feature type="repeat" description="WD 5">
    <location>
        <begin position="466"/>
        <end position="505"/>
    </location>
</feature>
<feature type="repeat" description="WD 6">
    <location>
        <begin position="508"/>
        <end position="547"/>
    </location>
</feature>
<organism>
    <name type="scientific">Mus musculus</name>
    <name type="common">Mouse</name>
    <dbReference type="NCBI Taxonomy" id="10090"/>
    <lineage>
        <taxon>Eukaryota</taxon>
        <taxon>Metazoa</taxon>
        <taxon>Chordata</taxon>
        <taxon>Craniata</taxon>
        <taxon>Vertebrata</taxon>
        <taxon>Euteleostomi</taxon>
        <taxon>Mammalia</taxon>
        <taxon>Eutheria</taxon>
        <taxon>Euarchontoglires</taxon>
        <taxon>Glires</taxon>
        <taxon>Rodentia</taxon>
        <taxon>Myomorpha</taxon>
        <taxon>Muroidea</taxon>
        <taxon>Muridae</taxon>
        <taxon>Murinae</taxon>
        <taxon>Mus</taxon>
        <taxon>Mus</taxon>
    </lineage>
</organism>
<accession>Q91WQ5</accession>
<accession>Q8BTL5</accession>
<keyword id="KW-0539">Nucleus</keyword>
<keyword id="KW-1185">Reference proteome</keyword>
<keyword id="KW-0677">Repeat</keyword>
<keyword id="KW-0804">Transcription</keyword>
<keyword id="KW-0805">Transcription regulation</keyword>
<keyword id="KW-0853">WD repeat</keyword>
<reference key="1">
    <citation type="journal article" date="2005" name="Science">
        <title>The transcriptional landscape of the mammalian genome.</title>
        <authorList>
            <person name="Carninci P."/>
            <person name="Kasukawa T."/>
            <person name="Katayama S."/>
            <person name="Gough J."/>
            <person name="Frith M.C."/>
            <person name="Maeda N."/>
            <person name="Oyama R."/>
            <person name="Ravasi T."/>
            <person name="Lenhard B."/>
            <person name="Wells C."/>
            <person name="Kodzius R."/>
            <person name="Shimokawa K."/>
            <person name="Bajic V.B."/>
            <person name="Brenner S.E."/>
            <person name="Batalov S."/>
            <person name="Forrest A.R."/>
            <person name="Zavolan M."/>
            <person name="Davis M.J."/>
            <person name="Wilming L.G."/>
            <person name="Aidinis V."/>
            <person name="Allen J.E."/>
            <person name="Ambesi-Impiombato A."/>
            <person name="Apweiler R."/>
            <person name="Aturaliya R.N."/>
            <person name="Bailey T.L."/>
            <person name="Bansal M."/>
            <person name="Baxter L."/>
            <person name="Beisel K.W."/>
            <person name="Bersano T."/>
            <person name="Bono H."/>
            <person name="Chalk A.M."/>
            <person name="Chiu K.P."/>
            <person name="Choudhary V."/>
            <person name="Christoffels A."/>
            <person name="Clutterbuck D.R."/>
            <person name="Crowe M.L."/>
            <person name="Dalla E."/>
            <person name="Dalrymple B.P."/>
            <person name="de Bono B."/>
            <person name="Della Gatta G."/>
            <person name="di Bernardo D."/>
            <person name="Down T."/>
            <person name="Engstrom P."/>
            <person name="Fagiolini M."/>
            <person name="Faulkner G."/>
            <person name="Fletcher C.F."/>
            <person name="Fukushima T."/>
            <person name="Furuno M."/>
            <person name="Futaki S."/>
            <person name="Gariboldi M."/>
            <person name="Georgii-Hemming P."/>
            <person name="Gingeras T.R."/>
            <person name="Gojobori T."/>
            <person name="Green R.E."/>
            <person name="Gustincich S."/>
            <person name="Harbers M."/>
            <person name="Hayashi Y."/>
            <person name="Hensch T.K."/>
            <person name="Hirokawa N."/>
            <person name="Hill D."/>
            <person name="Huminiecki L."/>
            <person name="Iacono M."/>
            <person name="Ikeo K."/>
            <person name="Iwama A."/>
            <person name="Ishikawa T."/>
            <person name="Jakt M."/>
            <person name="Kanapin A."/>
            <person name="Katoh M."/>
            <person name="Kawasawa Y."/>
            <person name="Kelso J."/>
            <person name="Kitamura H."/>
            <person name="Kitano H."/>
            <person name="Kollias G."/>
            <person name="Krishnan S.P."/>
            <person name="Kruger A."/>
            <person name="Kummerfeld S.K."/>
            <person name="Kurochkin I.V."/>
            <person name="Lareau L.F."/>
            <person name="Lazarevic D."/>
            <person name="Lipovich L."/>
            <person name="Liu J."/>
            <person name="Liuni S."/>
            <person name="McWilliam S."/>
            <person name="Madan Babu M."/>
            <person name="Madera M."/>
            <person name="Marchionni L."/>
            <person name="Matsuda H."/>
            <person name="Matsuzawa S."/>
            <person name="Miki H."/>
            <person name="Mignone F."/>
            <person name="Miyake S."/>
            <person name="Morris K."/>
            <person name="Mottagui-Tabar S."/>
            <person name="Mulder N."/>
            <person name="Nakano N."/>
            <person name="Nakauchi H."/>
            <person name="Ng P."/>
            <person name="Nilsson R."/>
            <person name="Nishiguchi S."/>
            <person name="Nishikawa S."/>
            <person name="Nori F."/>
            <person name="Ohara O."/>
            <person name="Okazaki Y."/>
            <person name="Orlando V."/>
            <person name="Pang K.C."/>
            <person name="Pavan W.J."/>
            <person name="Pavesi G."/>
            <person name="Pesole G."/>
            <person name="Petrovsky N."/>
            <person name="Piazza S."/>
            <person name="Reed J."/>
            <person name="Reid J.F."/>
            <person name="Ring B.Z."/>
            <person name="Ringwald M."/>
            <person name="Rost B."/>
            <person name="Ruan Y."/>
            <person name="Salzberg S.L."/>
            <person name="Sandelin A."/>
            <person name="Schneider C."/>
            <person name="Schoenbach C."/>
            <person name="Sekiguchi K."/>
            <person name="Semple C.A."/>
            <person name="Seno S."/>
            <person name="Sessa L."/>
            <person name="Sheng Y."/>
            <person name="Shibata Y."/>
            <person name="Shimada H."/>
            <person name="Shimada K."/>
            <person name="Silva D."/>
            <person name="Sinclair B."/>
            <person name="Sperling S."/>
            <person name="Stupka E."/>
            <person name="Sugiura K."/>
            <person name="Sultana R."/>
            <person name="Takenaka Y."/>
            <person name="Taki K."/>
            <person name="Tammoja K."/>
            <person name="Tan S.L."/>
            <person name="Tang S."/>
            <person name="Taylor M.S."/>
            <person name="Tegner J."/>
            <person name="Teichmann S.A."/>
            <person name="Ueda H.R."/>
            <person name="van Nimwegen E."/>
            <person name="Verardo R."/>
            <person name="Wei C.L."/>
            <person name="Yagi K."/>
            <person name="Yamanishi H."/>
            <person name="Zabarovsky E."/>
            <person name="Zhu S."/>
            <person name="Zimmer A."/>
            <person name="Hide W."/>
            <person name="Bult C."/>
            <person name="Grimmond S.M."/>
            <person name="Teasdale R.D."/>
            <person name="Liu E.T."/>
            <person name="Brusic V."/>
            <person name="Quackenbush J."/>
            <person name="Wahlestedt C."/>
            <person name="Mattick J.S."/>
            <person name="Hume D.A."/>
            <person name="Kai C."/>
            <person name="Sasaki D."/>
            <person name="Tomaru Y."/>
            <person name="Fukuda S."/>
            <person name="Kanamori-Katayama M."/>
            <person name="Suzuki M."/>
            <person name="Aoki J."/>
            <person name="Arakawa T."/>
            <person name="Iida J."/>
            <person name="Imamura K."/>
            <person name="Itoh M."/>
            <person name="Kato T."/>
            <person name="Kawaji H."/>
            <person name="Kawagashira N."/>
            <person name="Kawashima T."/>
            <person name="Kojima M."/>
            <person name="Kondo S."/>
            <person name="Konno H."/>
            <person name="Nakano K."/>
            <person name="Ninomiya N."/>
            <person name="Nishio T."/>
            <person name="Okada M."/>
            <person name="Plessy C."/>
            <person name="Shibata K."/>
            <person name="Shiraki T."/>
            <person name="Suzuki S."/>
            <person name="Tagami M."/>
            <person name="Waki K."/>
            <person name="Watahiki A."/>
            <person name="Okamura-Oho Y."/>
            <person name="Suzuki H."/>
            <person name="Kawai J."/>
            <person name="Hayashizaki Y."/>
        </authorList>
    </citation>
    <scope>NUCLEOTIDE SEQUENCE [LARGE SCALE MRNA]</scope>
    <source>
        <strain>C57BL/6J</strain>
        <tissue>Colon</tissue>
    </source>
</reference>
<reference key="2">
    <citation type="journal article" date="2004" name="Genome Res.">
        <title>The status, quality, and expansion of the NIH full-length cDNA project: the Mammalian Gene Collection (MGC).</title>
        <authorList>
            <consortium name="The MGC Project Team"/>
        </authorList>
    </citation>
    <scope>NUCLEOTIDE SEQUENCE [LARGE SCALE MRNA]</scope>
    <source>
        <tissue>Kidney</tissue>
    </source>
</reference>
<reference key="3">
    <citation type="journal article" date="2019" name="Mol. Cell">
        <title>TAF5L and TAF6L Maintain Self-Renewal of Embryonic Stem Cells via the MYC Regulatory Network.</title>
        <authorList>
            <person name="Seruggia D."/>
            <person name="Oti M."/>
            <person name="Tripathi P."/>
            <person name="Canver M.C."/>
            <person name="LeBlanc L."/>
            <person name="Di Giammartino D.C."/>
            <person name="Bullen M.J."/>
            <person name="Nefzger C.M."/>
            <person name="Sun Y.B.Y."/>
            <person name="Farouni R."/>
            <person name="Polo J.M."/>
            <person name="Pinello L."/>
            <person name="Apostolou E."/>
            <person name="Kim J."/>
            <person name="Orkin S.H."/>
            <person name="Das P.P."/>
        </authorList>
    </citation>
    <scope>FUNCTION</scope>
    <scope>SUBCELLULAR LOCATION</scope>
</reference>
<proteinExistence type="evidence at transcript level"/>
<sequence length="589" mass="65911">MKRVRTEQVQVAVSCYLKRRQYVDSEGPLKQGLRLSQTPEEMAANLTVQSESGCANAVSAAPCQAEPQQYEVQFGRLRSFLTDSDSQYSREVMPLLYPLFVYLHLNLVQSGPKSTVESFYSRFHGMFLQNASQKDVIEQLQTTQTIQDILSNFQLRAFLDNKYVVRLQEDSYNYLIRYLQSDNNTALCKVLAVHIHLDVQPAKRTDYQLYASGGSSRTENSSLEPPEVPSPILQNEAALEVLQESIKRVKDGPPSLTTICFYAFYNTEQLLNTAEISSDSKLLAAGFDNSCIKLWSLRSKKLKSEPHHVDTSRIRLACDTLEEEENEEDNTGTEMKILRGHCGPVYSTRFLADSSGLLSCSEDMSIRYWDLGSFTNTVLYQGHAYPVWDVDISPFSLYFASGSHDRTARLWSFDRTYPLRIYAGHLADVDCVKFHPNSNYLATGSTDKTVRLWSAQQGNSVRLFTGHRGPVLSLSFSPNGKYLASAGEDQRLKLWDLASGTLFKELRGHTDSITSLAFSPDSGLIASASMDNSVRVWDIRSTCCNTPADGSSGELVGVYTGQMSNVLSVQFMACNLLLVTGITQENQEH</sequence>
<comment type="function">
    <text evidence="1 2">Functions as a component of the PCAF complex. The PCAF complex is capable of efficiently acetylating histones in a nucleosomal context. The PCAF complex could be considered as the human version of the yeast SAGA complex (By similarity). With TAF6L, acts as an epigenetic regulator essential for somatic reprogramming. Regulates target genes through H3K9ac deposition and MYC recruitment which trigger MYC regulatory network to orchestrate gene expression programs to control embryonic stem cell state (PubMed:31005419).</text>
</comment>
<comment type="subunit">
    <text evidence="1">The PCAF complex is composed of a number of TBP-associated factors (TAFS), such as TAF5, TAF5L, TAF6, TAF6L, TAF9, TAF10 and TAF12, PCAF, and also PCAF-associated factors (PAFs), such as TADA2L/ADA2, TADA3L/ADA3 and SPT3. Component of the STAGA transcription coactivator-HAT complex, at least composed of SUPT3H, GCN5L2, TAF5L, TAF6L, SUPT7L, TADA3L, TAD1L, TAF10, TAF12, TRRAP and TAF9 (By similarity).</text>
</comment>
<comment type="subcellular location">
    <subcellularLocation>
        <location evidence="2">Nucleus</location>
    </subcellularLocation>
</comment>
<comment type="similarity">
    <text evidence="3">Belongs to the WD repeat TAF5 family.</text>
</comment>
<gene>
    <name evidence="4" type="primary">Taf5l</name>
    <name type="synonym">Paf65b</name>
</gene>
<dbReference type="EMBL" id="AK033477">
    <property type="protein sequence ID" value="BAC28309.1"/>
    <property type="molecule type" value="mRNA"/>
</dbReference>
<dbReference type="EMBL" id="AK089463">
    <property type="protein sequence ID" value="BAC40894.1"/>
    <property type="molecule type" value="mRNA"/>
</dbReference>
<dbReference type="EMBL" id="BC013550">
    <property type="protein sequence ID" value="AAH13550.1"/>
    <property type="molecule type" value="mRNA"/>
</dbReference>
<dbReference type="CCDS" id="CCDS22767.1"/>
<dbReference type="RefSeq" id="NP_001344244.1">
    <property type="nucleotide sequence ID" value="NM_001357315.1"/>
</dbReference>
<dbReference type="RefSeq" id="NP_598727.1">
    <property type="nucleotide sequence ID" value="NM_133966.3"/>
</dbReference>
<dbReference type="RefSeq" id="XP_006530609.1">
    <property type="nucleotide sequence ID" value="XM_006530546.3"/>
</dbReference>
<dbReference type="SMR" id="Q91WQ5"/>
<dbReference type="BioGRID" id="221810">
    <property type="interactions" value="8"/>
</dbReference>
<dbReference type="ComplexPortal" id="CPX-1024">
    <property type="entry name" value="PCAF histone acetylase complex"/>
</dbReference>
<dbReference type="ComplexPortal" id="CPX-6803">
    <property type="entry name" value="SAGA complex, KAT2B variant"/>
</dbReference>
<dbReference type="ComplexPortal" id="CPX-916">
    <property type="entry name" value="TFTC histone acetylation complex"/>
</dbReference>
<dbReference type="ComplexPortal" id="CPX-920">
    <property type="entry name" value="SAGA complex, KAT2A variant"/>
</dbReference>
<dbReference type="FunCoup" id="Q91WQ5">
    <property type="interactions" value="2576"/>
</dbReference>
<dbReference type="IntAct" id="Q91WQ5">
    <property type="interactions" value="2"/>
</dbReference>
<dbReference type="MINT" id="Q91WQ5"/>
<dbReference type="STRING" id="10090.ENSMUSP00000128710"/>
<dbReference type="iPTMnet" id="Q91WQ5"/>
<dbReference type="PhosphoSitePlus" id="Q91WQ5"/>
<dbReference type="PaxDb" id="10090-ENSMUSP00000090726"/>
<dbReference type="ProteomicsDB" id="254812"/>
<dbReference type="Pumba" id="Q91WQ5"/>
<dbReference type="Antibodypedia" id="20789">
    <property type="antibodies" value="218 antibodies from 30 providers"/>
</dbReference>
<dbReference type="DNASU" id="102162"/>
<dbReference type="Ensembl" id="ENSMUST00000093039.6">
    <property type="protein sequence ID" value="ENSMUSP00000090726.6"/>
    <property type="gene ID" value="ENSMUSG00000038697.16"/>
</dbReference>
<dbReference type="Ensembl" id="ENSMUST00000165628.9">
    <property type="protein sequence ID" value="ENSMUSP00000128710.2"/>
    <property type="gene ID" value="ENSMUSG00000038697.16"/>
</dbReference>
<dbReference type="GeneID" id="102162"/>
<dbReference type="KEGG" id="mmu:102162"/>
<dbReference type="UCSC" id="uc009nww.2">
    <property type="organism name" value="mouse"/>
</dbReference>
<dbReference type="AGR" id="MGI:1919039"/>
<dbReference type="CTD" id="27097"/>
<dbReference type="MGI" id="MGI:1919039">
    <property type="gene designation" value="Taf5l"/>
</dbReference>
<dbReference type="VEuPathDB" id="HostDB:ENSMUSG00000038697"/>
<dbReference type="eggNOG" id="KOG0263">
    <property type="taxonomic scope" value="Eukaryota"/>
</dbReference>
<dbReference type="GeneTree" id="ENSGT00940000153342"/>
<dbReference type="HOGENOM" id="CLU_005884_3_0_1"/>
<dbReference type="InParanoid" id="Q91WQ5"/>
<dbReference type="OMA" id="HLDMVHC"/>
<dbReference type="OrthoDB" id="10266330at2759"/>
<dbReference type="PhylomeDB" id="Q91WQ5"/>
<dbReference type="TreeFam" id="TF300669"/>
<dbReference type="BioGRID-ORCS" id="102162">
    <property type="hits" value="19 hits in 83 CRISPR screens"/>
</dbReference>
<dbReference type="ChiTaRS" id="Taf5l">
    <property type="organism name" value="mouse"/>
</dbReference>
<dbReference type="PRO" id="PR:Q91WQ5"/>
<dbReference type="Proteomes" id="UP000000589">
    <property type="component" value="Chromosome 8"/>
</dbReference>
<dbReference type="RNAct" id="Q91WQ5">
    <property type="molecule type" value="protein"/>
</dbReference>
<dbReference type="Bgee" id="ENSMUSG00000038697">
    <property type="expression patterns" value="Expressed in humerus cartilage element and 260 other cell types or tissues"/>
</dbReference>
<dbReference type="ExpressionAtlas" id="Q91WQ5">
    <property type="expression patterns" value="baseline and differential"/>
</dbReference>
<dbReference type="GO" id="GO:0036464">
    <property type="term" value="C:cytoplasmic ribonucleoprotein granule"/>
    <property type="evidence" value="ECO:0007669"/>
    <property type="project" value="Ensembl"/>
</dbReference>
<dbReference type="GO" id="GO:0016607">
    <property type="term" value="C:nuclear speck"/>
    <property type="evidence" value="ECO:0007669"/>
    <property type="project" value="Ensembl"/>
</dbReference>
<dbReference type="GO" id="GO:0005634">
    <property type="term" value="C:nucleus"/>
    <property type="evidence" value="ECO:0000314"/>
    <property type="project" value="UniProtKB"/>
</dbReference>
<dbReference type="GO" id="GO:0000124">
    <property type="term" value="C:SAGA complex"/>
    <property type="evidence" value="ECO:0000303"/>
    <property type="project" value="ComplexPortal"/>
</dbReference>
<dbReference type="GO" id="GO:0033276">
    <property type="term" value="C:transcription factor TFTC complex"/>
    <property type="evidence" value="ECO:0000303"/>
    <property type="project" value="ComplexPortal"/>
</dbReference>
<dbReference type="GO" id="GO:0003713">
    <property type="term" value="F:transcription coactivator activity"/>
    <property type="evidence" value="ECO:0007669"/>
    <property type="project" value="Ensembl"/>
</dbReference>
<dbReference type="GO" id="GO:0045893">
    <property type="term" value="P:positive regulation of DNA-templated transcription"/>
    <property type="evidence" value="ECO:0000303"/>
    <property type="project" value="ComplexPortal"/>
</dbReference>
<dbReference type="GO" id="GO:0006282">
    <property type="term" value="P:regulation of DNA repair"/>
    <property type="evidence" value="ECO:0000303"/>
    <property type="project" value="ComplexPortal"/>
</dbReference>
<dbReference type="GO" id="GO:0006355">
    <property type="term" value="P:regulation of DNA-templated transcription"/>
    <property type="evidence" value="ECO:0000314"/>
    <property type="project" value="UniProtKB"/>
</dbReference>
<dbReference type="GO" id="GO:0043484">
    <property type="term" value="P:regulation of RNA splicing"/>
    <property type="evidence" value="ECO:0000303"/>
    <property type="project" value="ComplexPortal"/>
</dbReference>
<dbReference type="GO" id="GO:1904672">
    <property type="term" value="P:regulation of somatic stem cell population maintenance"/>
    <property type="evidence" value="ECO:0000314"/>
    <property type="project" value="UniProtKB"/>
</dbReference>
<dbReference type="GO" id="GO:0006357">
    <property type="term" value="P:regulation of transcription by RNA polymerase II"/>
    <property type="evidence" value="ECO:0000266"/>
    <property type="project" value="ComplexPortal"/>
</dbReference>
<dbReference type="CDD" id="cd08044">
    <property type="entry name" value="TAF5_NTD2"/>
    <property type="match status" value="1"/>
</dbReference>
<dbReference type="CDD" id="cd00200">
    <property type="entry name" value="WD40"/>
    <property type="match status" value="1"/>
</dbReference>
<dbReference type="FunFam" id="1.25.40.500:FF:000002">
    <property type="entry name" value="TAF5-like RNA polymerase II p300/CBP-associated factor-associated factor 65 kDa subunit 5L"/>
    <property type="match status" value="1"/>
</dbReference>
<dbReference type="FunFam" id="2.130.10.10:FF:000202">
    <property type="entry name" value="TAF5-like RNA polymerase II p300/CBP-associated factor-associated factor 65 kDa subunit 5L"/>
    <property type="match status" value="1"/>
</dbReference>
<dbReference type="Gene3D" id="1.25.40.500">
    <property type="entry name" value="TFIID subunit TAF5, NTD2 domain"/>
    <property type="match status" value="1"/>
</dbReference>
<dbReference type="Gene3D" id="2.130.10.10">
    <property type="entry name" value="YVTN repeat-like/Quinoprotein amine dehydrogenase"/>
    <property type="match status" value="3"/>
</dbReference>
<dbReference type="InterPro" id="IPR020472">
    <property type="entry name" value="G-protein_beta_WD-40_rep"/>
</dbReference>
<dbReference type="InterPro" id="IPR007582">
    <property type="entry name" value="TFIID_NTD2"/>
</dbReference>
<dbReference type="InterPro" id="IPR037264">
    <property type="entry name" value="TFIID_NTD2_sf"/>
</dbReference>
<dbReference type="InterPro" id="IPR015943">
    <property type="entry name" value="WD40/YVTN_repeat-like_dom_sf"/>
</dbReference>
<dbReference type="InterPro" id="IPR019775">
    <property type="entry name" value="WD40_repeat_CS"/>
</dbReference>
<dbReference type="InterPro" id="IPR036322">
    <property type="entry name" value="WD40_repeat_dom_sf"/>
</dbReference>
<dbReference type="InterPro" id="IPR001680">
    <property type="entry name" value="WD40_rpt"/>
</dbReference>
<dbReference type="PANTHER" id="PTHR19879:SF6">
    <property type="entry name" value="TAF5-LIKE RNA POLYMERASE II P300_CBP-ASSOCIATED FACTOR-ASSOCIATED FACTOR 65 KDA SUBUNIT 5L"/>
    <property type="match status" value="1"/>
</dbReference>
<dbReference type="PANTHER" id="PTHR19879">
    <property type="entry name" value="TRANSCRIPTION INITIATION FACTOR TFIID"/>
    <property type="match status" value="1"/>
</dbReference>
<dbReference type="Pfam" id="PF04494">
    <property type="entry name" value="TFIID_NTD2"/>
    <property type="match status" value="1"/>
</dbReference>
<dbReference type="Pfam" id="PF00400">
    <property type="entry name" value="WD40"/>
    <property type="match status" value="5"/>
</dbReference>
<dbReference type="PRINTS" id="PR00320">
    <property type="entry name" value="GPROTEINBRPT"/>
</dbReference>
<dbReference type="SMART" id="SM00320">
    <property type="entry name" value="WD40"/>
    <property type="match status" value="6"/>
</dbReference>
<dbReference type="SUPFAM" id="SSF160897">
    <property type="entry name" value="Taf5 N-terminal domain-like"/>
    <property type="match status" value="1"/>
</dbReference>
<dbReference type="SUPFAM" id="SSF50978">
    <property type="entry name" value="WD40 repeat-like"/>
    <property type="match status" value="1"/>
</dbReference>
<dbReference type="PROSITE" id="PS00678">
    <property type="entry name" value="WD_REPEATS_1"/>
    <property type="match status" value="2"/>
</dbReference>
<dbReference type="PROSITE" id="PS50082">
    <property type="entry name" value="WD_REPEATS_2"/>
    <property type="match status" value="5"/>
</dbReference>
<dbReference type="PROSITE" id="PS50294">
    <property type="entry name" value="WD_REPEATS_REGION"/>
    <property type="match status" value="1"/>
</dbReference>
<evidence type="ECO:0000250" key="1">
    <source>
        <dbReference type="UniProtKB" id="O75529"/>
    </source>
</evidence>
<evidence type="ECO:0000269" key="2">
    <source>
    </source>
</evidence>
<evidence type="ECO:0000305" key="3"/>
<evidence type="ECO:0000312" key="4">
    <source>
        <dbReference type="MGI" id="MGI:1919039"/>
    </source>
</evidence>
<name>TAF5L_MOUSE</name>
<protein>
    <recommendedName>
        <fullName evidence="3">TAF5-like RNA polymerase II p300/CBP-associated factor-associated factor 65 kDa subunit 5L</fullName>
        <shortName evidence="3">TAF5L</shortName>
    </recommendedName>
    <alternativeName>
        <fullName>PCAF-associated factor 65 beta</fullName>
        <shortName>PAF65-beta</shortName>
    </alternativeName>
</protein>